<accession>Q9LIM6</accession>
<accession>A0A1I9LS36</accession>
<organism>
    <name type="scientific">Arabidopsis thaliana</name>
    <name type="common">Mouse-ear cress</name>
    <dbReference type="NCBI Taxonomy" id="3702"/>
    <lineage>
        <taxon>Eukaryota</taxon>
        <taxon>Viridiplantae</taxon>
        <taxon>Streptophyta</taxon>
        <taxon>Embryophyta</taxon>
        <taxon>Tracheophyta</taxon>
        <taxon>Spermatophyta</taxon>
        <taxon>Magnoliopsida</taxon>
        <taxon>eudicotyledons</taxon>
        <taxon>Gunneridae</taxon>
        <taxon>Pentapetalae</taxon>
        <taxon>rosids</taxon>
        <taxon>malvids</taxon>
        <taxon>Brassicales</taxon>
        <taxon>Brassicaceae</taxon>
        <taxon>Camelineae</taxon>
        <taxon>Arabidopsis</taxon>
    </lineage>
</organism>
<feature type="chain" id="PRO_0000409577" description="BTB/POZ domain-containing protein At3g26490">
    <location>
        <begin position="1"/>
        <end position="588"/>
    </location>
</feature>
<feature type="domain" description="BTB">
    <location>
        <begin position="28"/>
        <end position="99"/>
    </location>
</feature>
<feature type="domain" description="NPH3" evidence="3">
    <location>
        <begin position="218"/>
        <end position="507"/>
    </location>
</feature>
<feature type="region of interest" description="Disordered" evidence="4">
    <location>
        <begin position="529"/>
        <end position="554"/>
    </location>
</feature>
<feature type="modified residue" description="Phosphoserine" evidence="6 7">
    <location>
        <position position="376"/>
    </location>
</feature>
<feature type="modified residue" description="Phosphoserine" evidence="6 7">
    <location>
        <position position="378"/>
    </location>
</feature>
<feature type="modified residue" description="Phosphotyrosine" evidence="2">
    <location>
        <position position="448"/>
    </location>
</feature>
<reference key="1">
    <citation type="journal article" date="2000" name="DNA Res.">
        <title>Structural analysis of Arabidopsis thaliana chromosome 3. II. Sequence features of the 4,251,695 bp regions covered by 90 P1, TAC and BAC clones.</title>
        <authorList>
            <person name="Kaneko T."/>
            <person name="Katoh T."/>
            <person name="Sato S."/>
            <person name="Nakamura Y."/>
            <person name="Asamizu E."/>
            <person name="Tabata S."/>
        </authorList>
    </citation>
    <scope>NUCLEOTIDE SEQUENCE [LARGE SCALE GENOMIC DNA]</scope>
    <source>
        <strain>cv. Columbia</strain>
    </source>
</reference>
<reference key="2">
    <citation type="journal article" date="2017" name="Plant J.">
        <title>Araport11: a complete reannotation of the Arabidopsis thaliana reference genome.</title>
        <authorList>
            <person name="Cheng C.Y."/>
            <person name="Krishnakumar V."/>
            <person name="Chan A.P."/>
            <person name="Thibaud-Nissen F."/>
            <person name="Schobel S."/>
            <person name="Town C.D."/>
        </authorList>
    </citation>
    <scope>GENOME REANNOTATION</scope>
    <source>
        <strain>cv. Columbia</strain>
    </source>
</reference>
<reference key="3">
    <citation type="journal article" date="2003" name="Mol. Cell. Proteomics">
        <title>Large-scale analysis of in vivo phosphorylated membrane proteins by immobilized metal ion affinity chromatography and mass spectrometry.</title>
        <authorList>
            <person name="Nuehse T.S."/>
            <person name="Stensballe A."/>
            <person name="Jensen O.N."/>
            <person name="Peck S.C."/>
        </authorList>
    </citation>
    <scope>PHOSPHORYLATION [LARGE SCALE ANALYSIS] AT SER-376 AND SER-378</scope>
    <scope>IDENTIFICATION BY MASS SPECTROMETRY [LARGE SCALE ANALYSIS]</scope>
    <source>
        <strain>cv. La-0</strain>
    </source>
</reference>
<reference key="4">
    <citation type="journal article" date="2004" name="Plant Cell">
        <title>Phosphoproteomics of the Arabidopsis plasma membrane and a new phosphorylation site database.</title>
        <authorList>
            <person name="Nuehse T.S."/>
            <person name="Stensballe A."/>
            <person name="Jensen O.N."/>
            <person name="Peck S.C."/>
        </authorList>
    </citation>
    <scope>PHOSPHORYLATION [LARGE SCALE ANALYSIS] AT SER-376 AND SER-378</scope>
    <scope>IDENTIFICATION BY MASS SPECTROMETRY [LARGE SCALE ANALYSIS]</scope>
</reference>
<reference key="5">
    <citation type="journal article" date="2005" name="J. Biol. Chem.">
        <title>Cullins 3a and 3b assemble with members of the broad complex/tramtrack/bric-a-brac (BTB) protein family to form essential ubiquitin-protein ligases (E3s) in Arabidopsis.</title>
        <authorList>
            <person name="Gingerich D.J."/>
            <person name="Gagne J.M."/>
            <person name="Salter D.W."/>
            <person name="Hellmann H."/>
            <person name="Estelle M."/>
            <person name="Ma L."/>
            <person name="Vierstra R.D."/>
        </authorList>
    </citation>
    <scope>DOMAIN BTB</scope>
</reference>
<protein>
    <recommendedName>
        <fullName>BTB/POZ domain-containing protein At3g26490</fullName>
    </recommendedName>
</protein>
<gene>
    <name type="ordered locus">At3g26490</name>
    <name type="ORF">F20C19.23</name>
</gene>
<keyword id="KW-0597">Phosphoprotein</keyword>
<keyword id="KW-1185">Reference proteome</keyword>
<keyword id="KW-0833">Ubl conjugation pathway</keyword>
<sequence>MKFMELGFRPDTFYTVESVRSVSSDLLNDLVIQVKSTKYLLHKFPMLSKCLRLKNLVSSQETETSQEQQVIQLVDFPGETEAFELCAKFCYGITITLCAHNVVAVRCAAEYLGMTEEVELGETENLVQRLELFLTTCVFKSWRDSYVTLQTTKVLPLWSEDLGITNRCIEAIANGVTVSPGEDFSTQLETGLLRNRSRIRRDEILCNGGGGSKAESLRWWGEDLAELGLDLYRRTMVAIKSSHRKISPRLIGNALRIYASKWLPSIQESSADSNLVLESVISLLPEEKSSVPCSFLLQLLKMANVMNVSHSSKMELAIKAGNQLDKATVSELLIPLSDKSGMLYDVDVVKMMVKQFLSHISPEIRPTRTRTEHRRSRSEENINLEEIQEVRGSLSTSSSPPPLLSKVAKLVDSYLQEIARDVNLTVSKFVELAETIPDTSRICHDDLYNAIDVYLQVHKKIEKCERKRLCRILDCKKLSVEASKKAAQNELLPLRVIVQILFVEQARATLATTRNNITTNETAVLKRSFTTRREEGGQEEEERDETKPSGGFLQSTPSRFMALCAIPRQPKKLLCKLLSISRSLSQRI</sequence>
<proteinExistence type="evidence at protein level"/>
<comment type="function">
    <text evidence="1">May act as a substrate-specific adapter of an E3 ubiquitin-protein ligase complex (CUL3-RBX1-BTB) which mediates the ubiquitination and subsequent proteasomal degradation of target proteins.</text>
</comment>
<comment type="pathway">
    <text>Protein modification; protein ubiquitination.</text>
</comment>
<comment type="domain">
    <text evidence="5">The BTB/POZ domain mediates the interaction with some component of ubiquitin ligase complexes.</text>
</comment>
<comment type="similarity">
    <text evidence="3">Belongs to the NPH3 family.</text>
</comment>
<dbReference type="EMBL" id="AP001298">
    <property type="protein sequence ID" value="BAB02210.1"/>
    <property type="molecule type" value="Genomic_DNA"/>
</dbReference>
<dbReference type="EMBL" id="CP002686">
    <property type="protein sequence ID" value="AEE77166.1"/>
    <property type="molecule type" value="Genomic_DNA"/>
</dbReference>
<dbReference type="EMBL" id="CP002686">
    <property type="protein sequence ID" value="ANM65393.1"/>
    <property type="molecule type" value="Genomic_DNA"/>
</dbReference>
<dbReference type="EMBL" id="CP002686">
    <property type="protein sequence ID" value="ANM65394.1"/>
    <property type="molecule type" value="Genomic_DNA"/>
</dbReference>
<dbReference type="RefSeq" id="NP_001319646.1">
    <property type="nucleotide sequence ID" value="NM_001338805.1"/>
</dbReference>
<dbReference type="RefSeq" id="NP_001327366.1">
    <property type="nucleotide sequence ID" value="NM_001338807.1"/>
</dbReference>
<dbReference type="RefSeq" id="NP_189280.1">
    <property type="nucleotide sequence ID" value="NM_113556.2"/>
</dbReference>
<dbReference type="FunCoup" id="Q9LIM6">
    <property type="interactions" value="9"/>
</dbReference>
<dbReference type="STRING" id="3702.Q9LIM6"/>
<dbReference type="iPTMnet" id="Q9LIM6"/>
<dbReference type="PaxDb" id="3702-AT3G26490.1"/>
<dbReference type="ProteomicsDB" id="242361"/>
<dbReference type="EnsemblPlants" id="AT3G26490.1">
    <property type="protein sequence ID" value="AT3G26490.1"/>
    <property type="gene ID" value="AT3G26490"/>
</dbReference>
<dbReference type="EnsemblPlants" id="AT3G26490.3">
    <property type="protein sequence ID" value="AT3G26490.3"/>
    <property type="gene ID" value="AT3G26490"/>
</dbReference>
<dbReference type="EnsemblPlants" id="AT3G26490.4">
    <property type="protein sequence ID" value="AT3G26490.4"/>
    <property type="gene ID" value="AT3G26490"/>
</dbReference>
<dbReference type="GeneID" id="822256"/>
<dbReference type="Gramene" id="AT3G26490.1">
    <property type="protein sequence ID" value="AT3G26490.1"/>
    <property type="gene ID" value="AT3G26490"/>
</dbReference>
<dbReference type="Gramene" id="AT3G26490.3">
    <property type="protein sequence ID" value="AT3G26490.3"/>
    <property type="gene ID" value="AT3G26490"/>
</dbReference>
<dbReference type="Gramene" id="AT3G26490.4">
    <property type="protein sequence ID" value="AT3G26490.4"/>
    <property type="gene ID" value="AT3G26490"/>
</dbReference>
<dbReference type="KEGG" id="ath:AT3G26490"/>
<dbReference type="Araport" id="AT3G26490"/>
<dbReference type="TAIR" id="AT3G26490"/>
<dbReference type="eggNOG" id="ENOG502QSYM">
    <property type="taxonomic scope" value="Eukaryota"/>
</dbReference>
<dbReference type="HOGENOM" id="CLU_005994_5_2_1"/>
<dbReference type="InParanoid" id="Q9LIM6"/>
<dbReference type="OMA" id="SSRWWGE"/>
<dbReference type="PhylomeDB" id="Q9LIM6"/>
<dbReference type="UniPathway" id="UPA00143"/>
<dbReference type="PRO" id="PR:Q9LIM6"/>
<dbReference type="Proteomes" id="UP000006548">
    <property type="component" value="Chromosome 3"/>
</dbReference>
<dbReference type="ExpressionAtlas" id="Q9LIM6">
    <property type="expression patterns" value="baseline and differential"/>
</dbReference>
<dbReference type="GO" id="GO:0005886">
    <property type="term" value="C:plasma membrane"/>
    <property type="evidence" value="ECO:0007005"/>
    <property type="project" value="TAIR"/>
</dbReference>
<dbReference type="GO" id="GO:0016567">
    <property type="term" value="P:protein ubiquitination"/>
    <property type="evidence" value="ECO:0007669"/>
    <property type="project" value="UniProtKB-UniPathway"/>
</dbReference>
<dbReference type="FunFam" id="3.30.710.10:FF:000173">
    <property type="entry name" value="BTB/POZ domain-containing protein NPY2"/>
    <property type="match status" value="1"/>
</dbReference>
<dbReference type="Gene3D" id="3.30.710.10">
    <property type="entry name" value="Potassium Channel Kv1.1, Chain A"/>
    <property type="match status" value="1"/>
</dbReference>
<dbReference type="InterPro" id="IPR000210">
    <property type="entry name" value="BTB/POZ_dom"/>
</dbReference>
<dbReference type="InterPro" id="IPR043454">
    <property type="entry name" value="NPH3/RPT2-like"/>
</dbReference>
<dbReference type="InterPro" id="IPR027356">
    <property type="entry name" value="NPH3_dom"/>
</dbReference>
<dbReference type="InterPro" id="IPR011333">
    <property type="entry name" value="SKP1/BTB/POZ_sf"/>
</dbReference>
<dbReference type="PANTHER" id="PTHR32370">
    <property type="entry name" value="OS12G0117600 PROTEIN"/>
    <property type="match status" value="1"/>
</dbReference>
<dbReference type="Pfam" id="PF00651">
    <property type="entry name" value="BTB"/>
    <property type="match status" value="1"/>
</dbReference>
<dbReference type="Pfam" id="PF03000">
    <property type="entry name" value="NPH3"/>
    <property type="match status" value="1"/>
</dbReference>
<dbReference type="SUPFAM" id="SSF54695">
    <property type="entry name" value="POZ domain"/>
    <property type="match status" value="1"/>
</dbReference>
<dbReference type="PROSITE" id="PS51649">
    <property type="entry name" value="NPH3"/>
    <property type="match status" value="1"/>
</dbReference>
<name>Y3649_ARATH</name>
<evidence type="ECO:0000250" key="1"/>
<evidence type="ECO:0000250" key="2">
    <source>
        <dbReference type="UniProtKB" id="Q9FMF5"/>
    </source>
</evidence>
<evidence type="ECO:0000255" key="3">
    <source>
        <dbReference type="PROSITE-ProRule" id="PRU00982"/>
    </source>
</evidence>
<evidence type="ECO:0000256" key="4">
    <source>
        <dbReference type="SAM" id="MobiDB-lite"/>
    </source>
</evidence>
<evidence type="ECO:0000269" key="5">
    <source>
    </source>
</evidence>
<evidence type="ECO:0007744" key="6">
    <source>
    </source>
</evidence>
<evidence type="ECO:0007744" key="7">
    <source>
    </source>
</evidence>